<protein>
    <recommendedName>
        <fullName evidence="1">D-ribose pyranase</fullName>
        <ecNumber evidence="1">5.4.99.62</ecNumber>
    </recommendedName>
</protein>
<proteinExistence type="inferred from homology"/>
<feature type="chain" id="PRO_0000346257" description="D-ribose pyranase">
    <location>
        <begin position="1"/>
        <end position="139"/>
    </location>
</feature>
<feature type="active site" description="Proton donor" evidence="1">
    <location>
        <position position="20"/>
    </location>
</feature>
<feature type="binding site" evidence="1">
    <location>
        <position position="28"/>
    </location>
    <ligand>
        <name>substrate</name>
    </ligand>
</feature>
<feature type="binding site" evidence="1">
    <location>
        <position position="106"/>
    </location>
    <ligand>
        <name>substrate</name>
    </ligand>
</feature>
<feature type="binding site" evidence="1">
    <location>
        <begin position="128"/>
        <end position="130"/>
    </location>
    <ligand>
        <name>substrate</name>
    </ligand>
</feature>
<sequence length="139" mass="15283">MKKGTVLNSDISSVISRLGHTDTLVVCDAGLPIPKSTTRIDMALTQGVPSFMQVLGVVTNEMQVEAAIIAEEIKQHNPQLHETLLTHLEQLQKHQGNTIEIRYTTHEQFKQQTAESQAVIRSGECSPYANIILCAGVTF</sequence>
<comment type="function">
    <text evidence="1">Catalyzes the interconversion of beta-pyran and beta-furan forms of D-ribose.</text>
</comment>
<comment type="catalytic activity">
    <reaction evidence="1">
        <text>beta-D-ribopyranose = beta-D-ribofuranose</text>
        <dbReference type="Rhea" id="RHEA:25432"/>
        <dbReference type="ChEBI" id="CHEBI:27476"/>
        <dbReference type="ChEBI" id="CHEBI:47002"/>
        <dbReference type="EC" id="5.4.99.62"/>
    </reaction>
</comment>
<comment type="pathway">
    <text evidence="1">Carbohydrate metabolism; D-ribose degradation; D-ribose 5-phosphate from beta-D-ribopyranose: step 1/2.</text>
</comment>
<comment type="subunit">
    <text evidence="1">Homodecamer.</text>
</comment>
<comment type="subcellular location">
    <subcellularLocation>
        <location evidence="1">Cytoplasm</location>
    </subcellularLocation>
</comment>
<comment type="similarity">
    <text evidence="1">Belongs to the RbsD / FucU family. RbsD subfamily.</text>
</comment>
<evidence type="ECO:0000255" key="1">
    <source>
        <dbReference type="HAMAP-Rule" id="MF_01661"/>
    </source>
</evidence>
<dbReference type="EC" id="5.4.99.62" evidence="1"/>
<dbReference type="EMBL" id="CP000036">
    <property type="protein sequence ID" value="ABB68233.1"/>
    <property type="molecule type" value="Genomic_DNA"/>
</dbReference>
<dbReference type="RefSeq" id="WP_000715936.1">
    <property type="nucleotide sequence ID" value="NC_007613.1"/>
</dbReference>
<dbReference type="SMR" id="Q31UM5"/>
<dbReference type="GeneID" id="93778201"/>
<dbReference type="KEGG" id="sbo:SBO_3762"/>
<dbReference type="HOGENOM" id="CLU_135498_0_0_6"/>
<dbReference type="UniPathway" id="UPA00916">
    <property type="reaction ID" value="UER00888"/>
</dbReference>
<dbReference type="Proteomes" id="UP000007067">
    <property type="component" value="Chromosome"/>
</dbReference>
<dbReference type="GO" id="GO:0005829">
    <property type="term" value="C:cytosol"/>
    <property type="evidence" value="ECO:0007669"/>
    <property type="project" value="TreeGrafter"/>
</dbReference>
<dbReference type="GO" id="GO:0062193">
    <property type="term" value="F:D-ribose pyranase activity"/>
    <property type="evidence" value="ECO:0007669"/>
    <property type="project" value="UniProtKB-EC"/>
</dbReference>
<dbReference type="GO" id="GO:0016872">
    <property type="term" value="F:intramolecular lyase activity"/>
    <property type="evidence" value="ECO:0007669"/>
    <property type="project" value="UniProtKB-UniRule"/>
</dbReference>
<dbReference type="GO" id="GO:0048029">
    <property type="term" value="F:monosaccharide binding"/>
    <property type="evidence" value="ECO:0007669"/>
    <property type="project" value="InterPro"/>
</dbReference>
<dbReference type="GO" id="GO:0019303">
    <property type="term" value="P:D-ribose catabolic process"/>
    <property type="evidence" value="ECO:0007669"/>
    <property type="project" value="UniProtKB-UniRule"/>
</dbReference>
<dbReference type="FunFam" id="3.40.1650.10:FF:000002">
    <property type="entry name" value="D-ribose pyranase"/>
    <property type="match status" value="1"/>
</dbReference>
<dbReference type="Gene3D" id="3.40.1650.10">
    <property type="entry name" value="RbsD-like domain"/>
    <property type="match status" value="1"/>
</dbReference>
<dbReference type="HAMAP" id="MF_01661">
    <property type="entry name" value="D_rib_pyranase"/>
    <property type="match status" value="1"/>
</dbReference>
<dbReference type="InterPro" id="IPR023064">
    <property type="entry name" value="D-ribose_pyranase"/>
</dbReference>
<dbReference type="InterPro" id="IPR023750">
    <property type="entry name" value="RbsD-like_sf"/>
</dbReference>
<dbReference type="InterPro" id="IPR007721">
    <property type="entry name" value="RbsD_FucU"/>
</dbReference>
<dbReference type="NCBIfam" id="NF008761">
    <property type="entry name" value="PRK11797.1"/>
    <property type="match status" value="1"/>
</dbReference>
<dbReference type="PANTHER" id="PTHR37831">
    <property type="entry name" value="D-RIBOSE PYRANASE"/>
    <property type="match status" value="1"/>
</dbReference>
<dbReference type="PANTHER" id="PTHR37831:SF1">
    <property type="entry name" value="D-RIBOSE PYRANASE"/>
    <property type="match status" value="1"/>
</dbReference>
<dbReference type="Pfam" id="PF05025">
    <property type="entry name" value="RbsD_FucU"/>
    <property type="match status" value="1"/>
</dbReference>
<dbReference type="SUPFAM" id="SSF102546">
    <property type="entry name" value="RbsD-like"/>
    <property type="match status" value="1"/>
</dbReference>
<accession>Q31UM5</accession>
<name>RBSD_SHIBS</name>
<reference key="1">
    <citation type="journal article" date="2005" name="Nucleic Acids Res.">
        <title>Genome dynamics and diversity of Shigella species, the etiologic agents of bacillary dysentery.</title>
        <authorList>
            <person name="Yang F."/>
            <person name="Yang J."/>
            <person name="Zhang X."/>
            <person name="Chen L."/>
            <person name="Jiang Y."/>
            <person name="Yan Y."/>
            <person name="Tang X."/>
            <person name="Wang J."/>
            <person name="Xiong Z."/>
            <person name="Dong J."/>
            <person name="Xue Y."/>
            <person name="Zhu Y."/>
            <person name="Xu X."/>
            <person name="Sun L."/>
            <person name="Chen S."/>
            <person name="Nie H."/>
            <person name="Peng J."/>
            <person name="Xu J."/>
            <person name="Wang Y."/>
            <person name="Yuan Z."/>
            <person name="Wen Y."/>
            <person name="Yao Z."/>
            <person name="Shen Y."/>
            <person name="Qiang B."/>
            <person name="Hou Y."/>
            <person name="Yu J."/>
            <person name="Jin Q."/>
        </authorList>
    </citation>
    <scope>NUCLEOTIDE SEQUENCE [LARGE SCALE GENOMIC DNA]</scope>
    <source>
        <strain>Sb227</strain>
    </source>
</reference>
<gene>
    <name evidence="1" type="primary">rbsD</name>
    <name type="ordered locus">SBO_3762</name>
</gene>
<organism>
    <name type="scientific">Shigella boydii serotype 4 (strain Sb227)</name>
    <dbReference type="NCBI Taxonomy" id="300268"/>
    <lineage>
        <taxon>Bacteria</taxon>
        <taxon>Pseudomonadati</taxon>
        <taxon>Pseudomonadota</taxon>
        <taxon>Gammaproteobacteria</taxon>
        <taxon>Enterobacterales</taxon>
        <taxon>Enterobacteriaceae</taxon>
        <taxon>Shigella</taxon>
    </lineage>
</organism>
<keyword id="KW-0119">Carbohydrate metabolism</keyword>
<keyword id="KW-0963">Cytoplasm</keyword>
<keyword id="KW-0413">Isomerase</keyword>